<protein>
    <recommendedName>
        <fullName evidence="1">Ketol-acid reductoisomerase (NADP(+))</fullName>
        <shortName evidence="1">KARI</shortName>
        <ecNumber evidence="1">1.1.1.86</ecNumber>
    </recommendedName>
    <alternativeName>
        <fullName evidence="1">Acetohydroxy-acid isomeroreductase</fullName>
        <shortName evidence="1">AHIR</shortName>
    </alternativeName>
    <alternativeName>
        <fullName evidence="1">Alpha-keto-beta-hydroxylacyl reductoisomerase</fullName>
    </alternativeName>
    <alternativeName>
        <fullName evidence="1">Ketol-acid reductoisomerase type 1</fullName>
    </alternativeName>
    <alternativeName>
        <fullName evidence="1">Ketol-acid reductoisomerase type I</fullName>
    </alternativeName>
</protein>
<comment type="function">
    <text evidence="1">Involved in the biosynthesis of branched-chain amino acids (BCAA). Catalyzes an alkyl-migration followed by a ketol-acid reduction of (S)-2-acetolactate (S2AL) to yield (R)-2,3-dihydroxy-isovalerate. In the isomerase reaction, S2AL is rearranged via a Mg-dependent methyl migration to produce 3-hydroxy-3-methyl-2-ketobutyrate (HMKB). In the reductase reaction, this 2-ketoacid undergoes a metal-dependent reduction by NADPH to yield (R)-2,3-dihydroxy-isovalerate.</text>
</comment>
<comment type="catalytic activity">
    <reaction evidence="1">
        <text>(2R)-2,3-dihydroxy-3-methylbutanoate + NADP(+) = (2S)-2-acetolactate + NADPH + H(+)</text>
        <dbReference type="Rhea" id="RHEA:22068"/>
        <dbReference type="ChEBI" id="CHEBI:15378"/>
        <dbReference type="ChEBI" id="CHEBI:49072"/>
        <dbReference type="ChEBI" id="CHEBI:57783"/>
        <dbReference type="ChEBI" id="CHEBI:58349"/>
        <dbReference type="ChEBI" id="CHEBI:58476"/>
        <dbReference type="EC" id="1.1.1.86"/>
    </reaction>
</comment>
<comment type="catalytic activity">
    <reaction evidence="1">
        <text>(2R,3R)-2,3-dihydroxy-3-methylpentanoate + NADP(+) = (S)-2-ethyl-2-hydroxy-3-oxobutanoate + NADPH + H(+)</text>
        <dbReference type="Rhea" id="RHEA:13493"/>
        <dbReference type="ChEBI" id="CHEBI:15378"/>
        <dbReference type="ChEBI" id="CHEBI:49256"/>
        <dbReference type="ChEBI" id="CHEBI:49258"/>
        <dbReference type="ChEBI" id="CHEBI:57783"/>
        <dbReference type="ChEBI" id="CHEBI:58349"/>
        <dbReference type="EC" id="1.1.1.86"/>
    </reaction>
</comment>
<comment type="cofactor">
    <cofactor evidence="1">
        <name>Mg(2+)</name>
        <dbReference type="ChEBI" id="CHEBI:18420"/>
    </cofactor>
    <text evidence="1">Binds 2 magnesium ions per subunit.</text>
</comment>
<comment type="pathway">
    <text evidence="1">Amino-acid biosynthesis; L-isoleucine biosynthesis; L-isoleucine from 2-oxobutanoate: step 2/4.</text>
</comment>
<comment type="pathway">
    <text evidence="1">Amino-acid biosynthesis; L-valine biosynthesis; L-valine from pyruvate: step 2/4.</text>
</comment>
<comment type="similarity">
    <text evidence="1">Belongs to the ketol-acid reductoisomerase family.</text>
</comment>
<evidence type="ECO:0000255" key="1">
    <source>
        <dbReference type="HAMAP-Rule" id="MF_00435"/>
    </source>
</evidence>
<evidence type="ECO:0000255" key="2">
    <source>
        <dbReference type="PROSITE-ProRule" id="PRU01197"/>
    </source>
</evidence>
<evidence type="ECO:0000255" key="3">
    <source>
        <dbReference type="PROSITE-ProRule" id="PRU01198"/>
    </source>
</evidence>
<reference key="1">
    <citation type="journal article" date="2006" name="Appl. Environ. Microbiol.">
        <title>Complete genome sequence of the marine, chemolithoautotrophic, ammonia-oxidizing bacterium Nitrosococcus oceani ATCC 19707.</title>
        <authorList>
            <person name="Klotz M.G."/>
            <person name="Arp D.J."/>
            <person name="Chain P.S.G."/>
            <person name="El-Sheikh A.F."/>
            <person name="Hauser L.J."/>
            <person name="Hommes N.G."/>
            <person name="Larimer F.W."/>
            <person name="Malfatti S.A."/>
            <person name="Norton J.M."/>
            <person name="Poret-Peterson A.T."/>
            <person name="Vergez L.M."/>
            <person name="Ward B.B."/>
        </authorList>
    </citation>
    <scope>NUCLEOTIDE SEQUENCE [LARGE SCALE GENOMIC DNA]</scope>
    <source>
        <strain>ATCC 19707 / BCRC 17464 / JCM 30415 / NCIMB 11848 / C-107</strain>
    </source>
</reference>
<organism>
    <name type="scientific">Nitrosococcus oceani (strain ATCC 19707 / BCRC 17464 / JCM 30415 / NCIMB 11848 / C-107)</name>
    <dbReference type="NCBI Taxonomy" id="323261"/>
    <lineage>
        <taxon>Bacteria</taxon>
        <taxon>Pseudomonadati</taxon>
        <taxon>Pseudomonadota</taxon>
        <taxon>Gammaproteobacteria</taxon>
        <taxon>Chromatiales</taxon>
        <taxon>Chromatiaceae</taxon>
        <taxon>Nitrosococcus</taxon>
    </lineage>
</organism>
<proteinExistence type="inferred from homology"/>
<gene>
    <name evidence="1" type="primary">ilvC</name>
    <name type="ordered locus">Noc_2518</name>
</gene>
<accession>Q3J875</accession>
<feature type="chain" id="PRO_0000226185" description="Ketol-acid reductoisomerase (NADP(+))">
    <location>
        <begin position="1"/>
        <end position="338"/>
    </location>
</feature>
<feature type="domain" description="KARI N-terminal Rossmann" evidence="2">
    <location>
        <begin position="1"/>
        <end position="181"/>
    </location>
</feature>
<feature type="domain" description="KARI C-terminal knotted" evidence="3">
    <location>
        <begin position="182"/>
        <end position="327"/>
    </location>
</feature>
<feature type="active site" evidence="1">
    <location>
        <position position="107"/>
    </location>
</feature>
<feature type="binding site" evidence="1">
    <location>
        <begin position="24"/>
        <end position="27"/>
    </location>
    <ligand>
        <name>NADP(+)</name>
        <dbReference type="ChEBI" id="CHEBI:58349"/>
    </ligand>
</feature>
<feature type="binding site" evidence="1">
    <location>
        <position position="47"/>
    </location>
    <ligand>
        <name>NADP(+)</name>
        <dbReference type="ChEBI" id="CHEBI:58349"/>
    </ligand>
</feature>
<feature type="binding site" evidence="1">
    <location>
        <position position="50"/>
    </location>
    <ligand>
        <name>NADP(+)</name>
        <dbReference type="ChEBI" id="CHEBI:58349"/>
    </ligand>
</feature>
<feature type="binding site" evidence="1">
    <location>
        <position position="52"/>
    </location>
    <ligand>
        <name>NADP(+)</name>
        <dbReference type="ChEBI" id="CHEBI:58349"/>
    </ligand>
</feature>
<feature type="binding site" evidence="1">
    <location>
        <begin position="82"/>
        <end position="85"/>
    </location>
    <ligand>
        <name>NADP(+)</name>
        <dbReference type="ChEBI" id="CHEBI:58349"/>
    </ligand>
</feature>
<feature type="binding site" evidence="1">
    <location>
        <position position="133"/>
    </location>
    <ligand>
        <name>NADP(+)</name>
        <dbReference type="ChEBI" id="CHEBI:58349"/>
    </ligand>
</feature>
<feature type="binding site" evidence="1">
    <location>
        <position position="190"/>
    </location>
    <ligand>
        <name>Mg(2+)</name>
        <dbReference type="ChEBI" id="CHEBI:18420"/>
        <label>1</label>
    </ligand>
</feature>
<feature type="binding site" evidence="1">
    <location>
        <position position="190"/>
    </location>
    <ligand>
        <name>Mg(2+)</name>
        <dbReference type="ChEBI" id="CHEBI:18420"/>
        <label>2</label>
    </ligand>
</feature>
<feature type="binding site" evidence="1">
    <location>
        <position position="194"/>
    </location>
    <ligand>
        <name>Mg(2+)</name>
        <dbReference type="ChEBI" id="CHEBI:18420"/>
        <label>1</label>
    </ligand>
</feature>
<feature type="binding site" evidence="1">
    <location>
        <position position="226"/>
    </location>
    <ligand>
        <name>Mg(2+)</name>
        <dbReference type="ChEBI" id="CHEBI:18420"/>
        <label>2</label>
    </ligand>
</feature>
<feature type="binding site" evidence="1">
    <location>
        <position position="230"/>
    </location>
    <ligand>
        <name>Mg(2+)</name>
        <dbReference type="ChEBI" id="CHEBI:18420"/>
        <label>2</label>
    </ligand>
</feature>
<feature type="binding site" evidence="1">
    <location>
        <position position="251"/>
    </location>
    <ligand>
        <name>substrate</name>
    </ligand>
</feature>
<dbReference type="EC" id="1.1.1.86" evidence="1"/>
<dbReference type="EMBL" id="CP000127">
    <property type="protein sequence ID" value="ABA58971.1"/>
    <property type="molecule type" value="Genomic_DNA"/>
</dbReference>
<dbReference type="RefSeq" id="WP_004269174.1">
    <property type="nucleotide sequence ID" value="NC_007484.1"/>
</dbReference>
<dbReference type="SMR" id="Q3J875"/>
<dbReference type="FunCoup" id="Q3J875">
    <property type="interactions" value="529"/>
</dbReference>
<dbReference type="STRING" id="323261.Noc_2518"/>
<dbReference type="KEGG" id="noc:Noc_2518"/>
<dbReference type="eggNOG" id="COG0059">
    <property type="taxonomic scope" value="Bacteria"/>
</dbReference>
<dbReference type="HOGENOM" id="CLU_033821_0_1_6"/>
<dbReference type="InParanoid" id="Q3J875"/>
<dbReference type="UniPathway" id="UPA00047">
    <property type="reaction ID" value="UER00056"/>
</dbReference>
<dbReference type="UniPathway" id="UPA00049">
    <property type="reaction ID" value="UER00060"/>
</dbReference>
<dbReference type="Proteomes" id="UP000006838">
    <property type="component" value="Chromosome"/>
</dbReference>
<dbReference type="GO" id="GO:0005829">
    <property type="term" value="C:cytosol"/>
    <property type="evidence" value="ECO:0007669"/>
    <property type="project" value="TreeGrafter"/>
</dbReference>
<dbReference type="GO" id="GO:0004455">
    <property type="term" value="F:ketol-acid reductoisomerase activity"/>
    <property type="evidence" value="ECO:0007669"/>
    <property type="project" value="UniProtKB-UniRule"/>
</dbReference>
<dbReference type="GO" id="GO:0000287">
    <property type="term" value="F:magnesium ion binding"/>
    <property type="evidence" value="ECO:0007669"/>
    <property type="project" value="UniProtKB-UniRule"/>
</dbReference>
<dbReference type="GO" id="GO:0050661">
    <property type="term" value="F:NADP binding"/>
    <property type="evidence" value="ECO:0007669"/>
    <property type="project" value="InterPro"/>
</dbReference>
<dbReference type="GO" id="GO:0009097">
    <property type="term" value="P:isoleucine biosynthetic process"/>
    <property type="evidence" value="ECO:0007669"/>
    <property type="project" value="UniProtKB-UniRule"/>
</dbReference>
<dbReference type="GO" id="GO:0009099">
    <property type="term" value="P:L-valine biosynthetic process"/>
    <property type="evidence" value="ECO:0007669"/>
    <property type="project" value="UniProtKB-UniRule"/>
</dbReference>
<dbReference type="FunFam" id="3.40.50.720:FF:000023">
    <property type="entry name" value="Ketol-acid reductoisomerase (NADP(+))"/>
    <property type="match status" value="1"/>
</dbReference>
<dbReference type="Gene3D" id="6.10.240.10">
    <property type="match status" value="1"/>
</dbReference>
<dbReference type="Gene3D" id="3.40.50.720">
    <property type="entry name" value="NAD(P)-binding Rossmann-like Domain"/>
    <property type="match status" value="1"/>
</dbReference>
<dbReference type="HAMAP" id="MF_00435">
    <property type="entry name" value="IlvC"/>
    <property type="match status" value="1"/>
</dbReference>
<dbReference type="InterPro" id="IPR008927">
    <property type="entry name" value="6-PGluconate_DH-like_C_sf"/>
</dbReference>
<dbReference type="InterPro" id="IPR013023">
    <property type="entry name" value="KARI"/>
</dbReference>
<dbReference type="InterPro" id="IPR000506">
    <property type="entry name" value="KARI_C"/>
</dbReference>
<dbReference type="InterPro" id="IPR013116">
    <property type="entry name" value="KARI_N"/>
</dbReference>
<dbReference type="InterPro" id="IPR014359">
    <property type="entry name" value="KARI_prok"/>
</dbReference>
<dbReference type="InterPro" id="IPR036291">
    <property type="entry name" value="NAD(P)-bd_dom_sf"/>
</dbReference>
<dbReference type="NCBIfam" id="TIGR00465">
    <property type="entry name" value="ilvC"/>
    <property type="match status" value="1"/>
</dbReference>
<dbReference type="NCBIfam" id="NF004017">
    <property type="entry name" value="PRK05479.1"/>
    <property type="match status" value="1"/>
</dbReference>
<dbReference type="NCBIfam" id="NF009940">
    <property type="entry name" value="PRK13403.1"/>
    <property type="match status" value="1"/>
</dbReference>
<dbReference type="PANTHER" id="PTHR21371">
    <property type="entry name" value="KETOL-ACID REDUCTOISOMERASE, MITOCHONDRIAL"/>
    <property type="match status" value="1"/>
</dbReference>
<dbReference type="PANTHER" id="PTHR21371:SF1">
    <property type="entry name" value="KETOL-ACID REDUCTOISOMERASE, MITOCHONDRIAL"/>
    <property type="match status" value="1"/>
</dbReference>
<dbReference type="Pfam" id="PF01450">
    <property type="entry name" value="KARI_C"/>
    <property type="match status" value="1"/>
</dbReference>
<dbReference type="Pfam" id="PF07991">
    <property type="entry name" value="KARI_N"/>
    <property type="match status" value="1"/>
</dbReference>
<dbReference type="PIRSF" id="PIRSF000116">
    <property type="entry name" value="IlvC_gammaproteo"/>
    <property type="match status" value="1"/>
</dbReference>
<dbReference type="SUPFAM" id="SSF48179">
    <property type="entry name" value="6-phosphogluconate dehydrogenase C-terminal domain-like"/>
    <property type="match status" value="1"/>
</dbReference>
<dbReference type="SUPFAM" id="SSF51735">
    <property type="entry name" value="NAD(P)-binding Rossmann-fold domains"/>
    <property type="match status" value="1"/>
</dbReference>
<dbReference type="PROSITE" id="PS51851">
    <property type="entry name" value="KARI_C"/>
    <property type="match status" value="1"/>
</dbReference>
<dbReference type="PROSITE" id="PS51850">
    <property type="entry name" value="KARI_N"/>
    <property type="match status" value="1"/>
</dbReference>
<sequence>MNIYYDKDCDLSLIQGMRVAIIGYGSQGHAHANNLKDSGVDVVVGLRSGSTSVAKAENAGLTVLPIEAAIKEADLAMILAPDEHQSKLYQEDIEPHLKQNATLAFAHGFNIHFRQIEPRADLDVIMVAPKGPGHLVRSTYTQGGGVPSLIAVHQDVSTKAREIALSYAAANGGGRAGIIETAFREETETDLFGEQVVLCGGVTALVQAGFETLVEAGYAPEMAYFECLHELKLIVDLMYEGGIANMRYSISNTAEYGDFTRGPRIIDDKTKTEMRRILSEIQSGEFAREFILENQAGAPTLKAKRRLGQEHLIEQVGERLRSMMPWIGKSRIVDKSKN</sequence>
<name>ILVC_NITOC</name>
<keyword id="KW-0028">Amino-acid biosynthesis</keyword>
<keyword id="KW-0100">Branched-chain amino acid biosynthesis</keyword>
<keyword id="KW-0460">Magnesium</keyword>
<keyword id="KW-0479">Metal-binding</keyword>
<keyword id="KW-0521">NADP</keyword>
<keyword id="KW-0560">Oxidoreductase</keyword>
<keyword id="KW-1185">Reference proteome</keyword>